<reference key="1">
    <citation type="journal article" date="1998" name="DNA Res.">
        <title>Complete sequence and gene organization of the genome of a hyper-thermophilic archaebacterium, Pyrococcus horikoshii OT3.</title>
        <authorList>
            <person name="Kawarabayasi Y."/>
            <person name="Sawada M."/>
            <person name="Horikawa H."/>
            <person name="Haikawa Y."/>
            <person name="Hino Y."/>
            <person name="Yamamoto S."/>
            <person name="Sekine M."/>
            <person name="Baba S."/>
            <person name="Kosugi H."/>
            <person name="Hosoyama A."/>
            <person name="Nagai Y."/>
            <person name="Sakai M."/>
            <person name="Ogura K."/>
            <person name="Otsuka R."/>
            <person name="Nakazawa H."/>
            <person name="Takamiya M."/>
            <person name="Ohfuku Y."/>
            <person name="Funahashi T."/>
            <person name="Tanaka T."/>
            <person name="Kudoh Y."/>
            <person name="Yamazaki J."/>
            <person name="Kushida N."/>
            <person name="Oguchi A."/>
            <person name="Aoki K."/>
            <person name="Yoshizawa T."/>
            <person name="Nakamura Y."/>
            <person name="Robb F.T."/>
            <person name="Horikoshi K."/>
            <person name="Masuchi Y."/>
            <person name="Shizuya H."/>
            <person name="Kikuchi H."/>
        </authorList>
    </citation>
    <scope>NUCLEOTIDE SEQUENCE [LARGE SCALE GENOMIC DNA]</scope>
    <source>
        <strain>ATCC 700860 / DSM 12428 / JCM 9974 / NBRC 100139 / OT-3</strain>
    </source>
</reference>
<name>KPTA_PYRHO</name>
<proteinExistence type="evidence at protein level"/>
<sequence length="177" mass="20868">MRFKVSKLMAYILRHSPWEFGLEPDEEGFVSIEELVNAVRKVYPWVTEEYIREIVERDEKGRYEIRGNKIRARYGHSYPVILRHEEDKESKVLYHGTVRRNLKGIMREGIKPMKRQYVHLSINYEDAYNTGRRHGEDVVVLIIDAECLRNKGYKILKAGKKVRIVKHVPVDCISGIL</sequence>
<comment type="function">
    <text evidence="1">Removes the 2'-phosphate from RNA via an intermediate in which the phosphate is ADP-ribosylated by NAD followed by a presumed transesterification to release the RNA and generate ADP-ribose 1''-2''-cyclic phosphate (APPR&gt;P). May function as an ADP-ribosylase (By similarity).</text>
</comment>
<comment type="similarity">
    <text evidence="2">Belongs to the KptA/TPT1 family.</text>
</comment>
<gene>
    <name type="primary">kptA</name>
    <name type="ordered locus">PH0160</name>
</gene>
<accession>O57899</accession>
<keyword id="KW-0002">3D-structure</keyword>
<keyword id="KW-0520">NAD</keyword>
<keyword id="KW-0808">Transferase</keyword>
<evidence type="ECO:0000250" key="1"/>
<evidence type="ECO:0000305" key="2"/>
<evidence type="ECO:0007829" key="3">
    <source>
        <dbReference type="PDB" id="8TFI"/>
    </source>
</evidence>
<protein>
    <recommendedName>
        <fullName>Probable RNA 2'-phosphotransferase</fullName>
        <ecNumber>2.7.1.-</ecNumber>
    </recommendedName>
</protein>
<feature type="chain" id="PRO_0000157493" description="Probable RNA 2'-phosphotransferase">
    <location>
        <begin position="1"/>
        <end position="177"/>
    </location>
</feature>
<feature type="helix" evidence="3">
    <location>
        <begin position="2"/>
        <end position="14"/>
    </location>
</feature>
<feature type="helix" evidence="3">
    <location>
        <begin position="18"/>
        <end position="20"/>
    </location>
</feature>
<feature type="helix" evidence="3">
    <location>
        <begin position="32"/>
        <end position="40"/>
    </location>
</feature>
<feature type="helix" evidence="3">
    <location>
        <begin position="48"/>
        <end position="57"/>
    </location>
</feature>
<feature type="strand" evidence="3">
    <location>
        <begin position="63"/>
        <end position="66"/>
    </location>
</feature>
<feature type="strand" evidence="3">
    <location>
        <begin position="69"/>
        <end position="74"/>
    </location>
</feature>
<feature type="strand" evidence="3">
    <location>
        <begin position="91"/>
        <end position="98"/>
    </location>
</feature>
<feature type="helix" evidence="3">
    <location>
        <begin position="99"/>
        <end position="101"/>
    </location>
</feature>
<feature type="helix" evidence="3">
    <location>
        <begin position="102"/>
        <end position="108"/>
    </location>
</feature>
<feature type="strand" evidence="3">
    <location>
        <begin position="113"/>
        <end position="116"/>
    </location>
</feature>
<feature type="strand" evidence="3">
    <location>
        <begin position="118"/>
        <end position="123"/>
    </location>
</feature>
<feature type="helix" evidence="3">
    <location>
        <begin position="124"/>
        <end position="131"/>
    </location>
</feature>
<feature type="helix" evidence="3">
    <location>
        <begin position="132"/>
        <end position="134"/>
    </location>
</feature>
<feature type="strand" evidence="3">
    <location>
        <begin position="136"/>
        <end position="144"/>
    </location>
</feature>
<feature type="helix" evidence="3">
    <location>
        <begin position="145"/>
        <end position="150"/>
    </location>
</feature>
<feature type="strand" evidence="3">
    <location>
        <begin position="159"/>
        <end position="166"/>
    </location>
</feature>
<feature type="helix" evidence="3">
    <location>
        <begin position="170"/>
        <end position="172"/>
    </location>
</feature>
<feature type="strand" evidence="3">
    <location>
        <begin position="173"/>
        <end position="176"/>
    </location>
</feature>
<dbReference type="EC" id="2.7.1.-"/>
<dbReference type="EMBL" id="BA000001">
    <property type="protein sequence ID" value="BAA29229.1"/>
    <property type="molecule type" value="Genomic_DNA"/>
</dbReference>
<dbReference type="PIR" id="F71237">
    <property type="entry name" value="F71237"/>
</dbReference>
<dbReference type="PDB" id="8TFI">
    <property type="method" value="X-ray"/>
    <property type="resolution" value="1.97 A"/>
    <property type="chains" value="A=2-177"/>
</dbReference>
<dbReference type="PDB" id="8TFX">
    <property type="method" value="X-ray"/>
    <property type="resolution" value="1.70 A"/>
    <property type="chains" value="A=2-177"/>
</dbReference>
<dbReference type="PDB" id="8TFY">
    <property type="method" value="X-ray"/>
    <property type="resolution" value="1.54 A"/>
    <property type="chains" value="A=2-177"/>
</dbReference>
<dbReference type="PDB" id="8TFZ">
    <property type="method" value="X-ray"/>
    <property type="resolution" value="2.06 A"/>
    <property type="chains" value="A/B=2-177"/>
</dbReference>
<dbReference type="PDB" id="8TG5">
    <property type="method" value="X-ray"/>
    <property type="resolution" value="2.00 A"/>
    <property type="chains" value="A=2-177"/>
</dbReference>
<dbReference type="PDB" id="8TKB">
    <property type="method" value="X-ray"/>
    <property type="resolution" value="1.71 A"/>
    <property type="chains" value="A=2-177"/>
</dbReference>
<dbReference type="PDBsum" id="8TFI"/>
<dbReference type="PDBsum" id="8TFX"/>
<dbReference type="PDBsum" id="8TFY"/>
<dbReference type="PDBsum" id="8TFZ"/>
<dbReference type="PDBsum" id="8TG5"/>
<dbReference type="PDBsum" id="8TKB"/>
<dbReference type="SMR" id="O57899"/>
<dbReference type="STRING" id="70601.gene:9377070"/>
<dbReference type="EnsemblBacteria" id="BAA29229">
    <property type="protein sequence ID" value="BAA29229"/>
    <property type="gene ID" value="BAA29229"/>
</dbReference>
<dbReference type="KEGG" id="pho:PH0160"/>
<dbReference type="eggNOG" id="arCOG04063">
    <property type="taxonomic scope" value="Archaea"/>
</dbReference>
<dbReference type="OrthoDB" id="24376at2157"/>
<dbReference type="BRENDA" id="2.7.1.160">
    <property type="organism ID" value="5244"/>
</dbReference>
<dbReference type="Proteomes" id="UP000000752">
    <property type="component" value="Chromosome"/>
</dbReference>
<dbReference type="GO" id="GO:0003950">
    <property type="term" value="F:NAD+ poly-ADP-ribosyltransferase activity"/>
    <property type="evidence" value="ECO:0007669"/>
    <property type="project" value="InterPro"/>
</dbReference>
<dbReference type="GO" id="GO:0000215">
    <property type="term" value="F:tRNA 2'-phosphotransferase activity"/>
    <property type="evidence" value="ECO:0007669"/>
    <property type="project" value="TreeGrafter"/>
</dbReference>
<dbReference type="GO" id="GO:0006388">
    <property type="term" value="P:tRNA splicing, via endonucleolytic cleavage and ligation"/>
    <property type="evidence" value="ECO:0007669"/>
    <property type="project" value="UniProtKB-UniRule"/>
</dbReference>
<dbReference type="Gene3D" id="3.20.170.30">
    <property type="match status" value="1"/>
</dbReference>
<dbReference type="Gene3D" id="1.10.10.970">
    <property type="entry name" value="RNA 2'-phosphotransferase, Tpt1/KptA family, N-terminal domain"/>
    <property type="match status" value="1"/>
</dbReference>
<dbReference type="HAMAP" id="MF_00299">
    <property type="entry name" value="KptA"/>
    <property type="match status" value="1"/>
</dbReference>
<dbReference type="InterPro" id="IPR002745">
    <property type="entry name" value="Ptrans_KptA/Tpt1"/>
</dbReference>
<dbReference type="InterPro" id="IPR042081">
    <property type="entry name" value="RNA_2'-PTrans_C"/>
</dbReference>
<dbReference type="InterPro" id="IPR022928">
    <property type="entry name" value="RNA_2'-PTrans_KptA"/>
</dbReference>
<dbReference type="InterPro" id="IPR042080">
    <property type="entry name" value="RNA_2'-PTrans_N"/>
</dbReference>
<dbReference type="NCBIfam" id="NF002013">
    <property type="entry name" value="PRK00819.1-2"/>
    <property type="match status" value="1"/>
</dbReference>
<dbReference type="PANTHER" id="PTHR12684">
    <property type="entry name" value="PUTATIVE PHOSPHOTRANSFERASE"/>
    <property type="match status" value="1"/>
</dbReference>
<dbReference type="PANTHER" id="PTHR12684:SF2">
    <property type="entry name" value="TRNA 2'-PHOSPHOTRANSFERASE 1"/>
    <property type="match status" value="1"/>
</dbReference>
<dbReference type="Pfam" id="PF01885">
    <property type="entry name" value="PTS_2-RNA"/>
    <property type="match status" value="1"/>
</dbReference>
<dbReference type="SUPFAM" id="SSF56399">
    <property type="entry name" value="ADP-ribosylation"/>
    <property type="match status" value="1"/>
</dbReference>
<organism>
    <name type="scientific">Pyrococcus horikoshii (strain ATCC 700860 / DSM 12428 / JCM 9974 / NBRC 100139 / OT-3)</name>
    <dbReference type="NCBI Taxonomy" id="70601"/>
    <lineage>
        <taxon>Archaea</taxon>
        <taxon>Methanobacteriati</taxon>
        <taxon>Methanobacteriota</taxon>
        <taxon>Thermococci</taxon>
        <taxon>Thermococcales</taxon>
        <taxon>Thermococcaceae</taxon>
        <taxon>Pyrococcus</taxon>
    </lineage>
</organism>